<sequence length="498" mass="56376">SCADDRNPLEECFQETDYEEFLEIARNGLKATSNPKHVVIVGAGMSGLSAAYVLAGAGHQVTVLEASERAGGRVRTYRNDKEGWYANLGPMRLPEKHRIVREYITKFGLQLNEFSQENENAWYFIKNIRKRVGEVKKDPGLLQYPVKPSEEGKSAGQLYEESLGKVVEELKRTNCSYILDKYDTYSTKEYLIKEGNLSPGAVDMIGDLLNEDSGYYVSFIESLKHDNIFGYEKRFNEIVDGMDKLPTSMYQAIEEKVRFNARVIKIQQNDNEVTVTYQTSENEMSPVTADYVIVCTTSRAARRITFEPPLPPKKAHALRSVHYRSGTKIFLTCTKKFWEDDGIHGGKSTTDLPSRFVYYPNHDFSSGSAVIMAYGIGDDANFFQALDHKDCGDTVINDLSLIHQLTKEEIQSFCYLSKIQRWSLDKYAMGGITTFTPYQFQHFSEALTAPFKRIYFAGEYTAQFHGWIDSTIKSGLTAARDVNRASENPSGIHLSNDN</sequence>
<proteinExistence type="evidence at protein level"/>
<keyword id="KW-0044">Antibiotic</keyword>
<keyword id="KW-0929">Antimicrobial</keyword>
<keyword id="KW-0903">Direct protein sequencing</keyword>
<keyword id="KW-1015">Disulfide bond</keyword>
<keyword id="KW-0274">FAD</keyword>
<keyword id="KW-0285">Flavoprotein</keyword>
<keyword id="KW-0325">Glycoprotein</keyword>
<keyword id="KW-0560">Oxidoreductase</keyword>
<keyword id="KW-0964">Secreted</keyword>
<keyword id="KW-0732">Signal</keyword>
<feature type="signal peptide" evidence="4">
    <location>
        <begin position="1" status="less than"/>
        <end position="3"/>
    </location>
</feature>
<feature type="chain" id="PRO_0000430747" description="L-amino acid oxidase Bs29">
    <location>
        <begin position="4"/>
        <end position="498" status="greater than"/>
    </location>
</feature>
<feature type="binding site" evidence="2">
    <location>
        <begin position="45"/>
        <end position="46"/>
    </location>
    <ligand>
        <name>FAD</name>
        <dbReference type="ChEBI" id="CHEBI:57692"/>
    </ligand>
</feature>
<feature type="binding site" evidence="2">
    <location>
        <begin position="65"/>
        <end position="66"/>
    </location>
    <ligand>
        <name>FAD</name>
        <dbReference type="ChEBI" id="CHEBI:57692"/>
    </ligand>
</feature>
<feature type="binding site" evidence="2">
    <location>
        <position position="73"/>
    </location>
    <ligand>
        <name>FAD</name>
        <dbReference type="ChEBI" id="CHEBI:57692"/>
    </ligand>
</feature>
<feature type="binding site" evidence="2">
    <location>
        <begin position="89"/>
        <end position="92"/>
    </location>
    <ligand>
        <name>FAD</name>
        <dbReference type="ChEBI" id="CHEBI:57692"/>
    </ligand>
</feature>
<feature type="binding site" evidence="2">
    <location>
        <position position="92"/>
    </location>
    <ligand>
        <name>substrate</name>
    </ligand>
</feature>
<feature type="binding site" evidence="2">
    <location>
        <position position="225"/>
    </location>
    <ligand>
        <name>substrate</name>
    </ligand>
</feature>
<feature type="binding site" evidence="2">
    <location>
        <position position="263"/>
    </location>
    <ligand>
        <name>FAD</name>
        <dbReference type="ChEBI" id="CHEBI:57692"/>
    </ligand>
</feature>
<feature type="binding site" evidence="2">
    <location>
        <position position="374"/>
    </location>
    <ligand>
        <name>substrate</name>
    </ligand>
</feature>
<feature type="binding site" evidence="2">
    <location>
        <position position="459"/>
    </location>
    <ligand>
        <name>FAD</name>
        <dbReference type="ChEBI" id="CHEBI:57692"/>
    </ligand>
</feature>
<feature type="binding site" evidence="2">
    <location>
        <begin position="466"/>
        <end position="471"/>
    </location>
    <ligand>
        <name>FAD</name>
        <dbReference type="ChEBI" id="CHEBI:57692"/>
    </ligand>
</feature>
<feature type="binding site" evidence="2">
    <location>
        <begin position="466"/>
        <end position="467"/>
    </location>
    <ligand>
        <name>substrate</name>
    </ligand>
</feature>
<feature type="glycosylation site" description="N-linked (GlcNAc...) asparagine" evidence="3">
    <location>
        <position position="174"/>
    </location>
</feature>
<feature type="disulfide bond" evidence="2">
    <location>
        <begin position="12"/>
        <end position="175"/>
    </location>
</feature>
<feature type="disulfide bond" evidence="2">
    <location>
        <begin position="333"/>
        <end position="414"/>
    </location>
</feature>
<feature type="non-terminal residue" evidence="7">
    <location>
        <position position="1"/>
    </location>
</feature>
<feature type="non-terminal residue" evidence="7">
    <location>
        <position position="498"/>
    </location>
</feature>
<accession>A0A024BTN9</accession>
<reference key="1">
    <citation type="journal article" date="2014" name="Int. J. Biol. Macromol.">
        <title>Characterization and cDNA sequence of Bothriechis schlegeliil-amino acid oxidase with antibacterial activity.</title>
        <authorList>
            <person name="Vargas Munoz L.J."/>
            <person name="Estrada-Gomez S."/>
            <person name="Nunez V."/>
            <person name="Sanz L."/>
            <person name="Calvete J.J."/>
        </authorList>
    </citation>
    <scope>NUCLEOTIDE SEQUENCE [MRNA]</scope>
    <scope>FUNCTION</scope>
    <scope>ACTIVITY REGULATION</scope>
    <scope>BIOPHYSICOCHEMICAL PROPERTIES</scope>
    <scope>CATALYTIC ACTIVITY</scope>
    <scope>SUBCELLULAR LOCATION</scope>
    <scope>IDENTIFICATION BY MASS SPECTROMETRY</scope>
    <source>
        <tissue>Venom</tissue>
        <tissue>Venom gland</tissue>
    </source>
</reference>
<reference key="2">
    <citation type="journal article" date="2008" name="J. Proteome Res.">
        <title>Snake venomics and antivenomics of the arboreal neotropical pitvipers Bothriechis lateralis and Bothriechis schlegelii.</title>
        <authorList>
            <person name="Lomonte B."/>
            <person name="Escolano J."/>
            <person name="Fernandez J."/>
            <person name="Sanz L."/>
            <person name="Angulo Y."/>
            <person name="Gutierrez J.M."/>
            <person name="Calvete J.J."/>
        </authorList>
    </citation>
    <scope>PROTEIN SEQUENCE OF 4-19</scope>
    <scope>IDENTIFICATION BY MASS SPECTROMETRY</scope>
    <source>
        <tissue>Venom</tissue>
    </source>
</reference>
<evidence type="ECO:0000250" key="1">
    <source>
        <dbReference type="UniProtKB" id="P81382"/>
    </source>
</evidence>
<evidence type="ECO:0000250" key="2">
    <source>
        <dbReference type="UniProtKB" id="Q6STF1"/>
    </source>
</evidence>
<evidence type="ECO:0000255" key="3">
    <source>
        <dbReference type="PROSITE-ProRule" id="PRU00498"/>
    </source>
</evidence>
<evidence type="ECO:0000269" key="4">
    <source>
    </source>
</evidence>
<evidence type="ECO:0000269" key="5">
    <source>
    </source>
</evidence>
<evidence type="ECO:0000303" key="6">
    <source>
    </source>
</evidence>
<evidence type="ECO:0000303" key="7">
    <source>
    </source>
</evidence>
<evidence type="ECO:0000305" key="8"/>
<evidence type="ECO:0000305" key="9">
    <source>
    </source>
</evidence>
<name>OXLA_BOTSC</name>
<comment type="function">
    <text evidence="5">Catalyzes an oxidative deamination of predominantly hydrophobic and aromatic L-amino acids, thus producing hydrogen peroxide that may contribute to the diverse toxic effects of this enzyme (PubMed:24875315). Shows activity on L-Leu (PubMed:24875315). Damage cell membranes of the Gram-positive bacteria S.aureus (MIC=4 ug/ml and MBC=8 ug/ml) and the Gram-negative bacteria A.baumanni (MIC=2 ug/ml and MBC=4 ug/ml) (PubMed:24875315). This antibacterial activity is dependent on the production of hydrogen peroxyde, since it is inhibited by catalase, a hydrogen peroxyde scavenger (PubMed:24875315).</text>
</comment>
<comment type="catalytic activity">
    <reaction evidence="5">
        <text>an L-alpha-amino acid + O2 + H2O = a 2-oxocarboxylate + H2O2 + NH4(+)</text>
        <dbReference type="Rhea" id="RHEA:13781"/>
        <dbReference type="ChEBI" id="CHEBI:15377"/>
        <dbReference type="ChEBI" id="CHEBI:15379"/>
        <dbReference type="ChEBI" id="CHEBI:16240"/>
        <dbReference type="ChEBI" id="CHEBI:28938"/>
        <dbReference type="ChEBI" id="CHEBI:35179"/>
        <dbReference type="ChEBI" id="CHEBI:59869"/>
        <dbReference type="EC" id="1.4.3.2"/>
    </reaction>
</comment>
<comment type="catalytic activity">
    <reaction evidence="5">
        <text>L-leucine + O2 + H2O = 4-methyl-2-oxopentanoate + H2O2 + NH4(+)</text>
        <dbReference type="Rhea" id="RHEA:60996"/>
        <dbReference type="ChEBI" id="CHEBI:15377"/>
        <dbReference type="ChEBI" id="CHEBI:15379"/>
        <dbReference type="ChEBI" id="CHEBI:16240"/>
        <dbReference type="ChEBI" id="CHEBI:17865"/>
        <dbReference type="ChEBI" id="CHEBI:28938"/>
        <dbReference type="ChEBI" id="CHEBI:57427"/>
    </reaction>
</comment>
<comment type="cofactor">
    <cofactor evidence="1">
        <name>FAD</name>
        <dbReference type="ChEBI" id="CHEBI:57692"/>
    </cofactor>
</comment>
<comment type="biophysicochemical properties">
    <kinetics>
        <KM evidence="5">16.37 uM for L-Leu</KM>
        <Vmax evidence="5">0.39 umol/min/mg enzyme</Vmax>
    </kinetics>
</comment>
<comment type="subunit">
    <text evidence="9">Monomer. This is in contrast with most of its orthologs, that are non-covalently linked homodimers.</text>
</comment>
<comment type="subcellular location">
    <subcellularLocation>
        <location evidence="5">Secreted</location>
    </subcellularLocation>
</comment>
<comment type="tissue specificity">
    <text evidence="9">Expressed by the venom gland.</text>
</comment>
<comment type="miscellaneous">
    <text evidence="5">Negative results: is not cytotoxic to C2C12 cells (40 ug/ml), peripheral blood mononuclear cells and to E.coli (200 ug/ml).</text>
</comment>
<comment type="similarity">
    <text evidence="8">Belongs to the flavin monoamine oxidase family. FIG1 subfamily.</text>
</comment>
<dbReference type="EC" id="1.4.3.2" evidence="5"/>
<dbReference type="EMBL" id="KJ513472">
    <property type="protein sequence ID" value="AHZ20792.1"/>
    <property type="molecule type" value="mRNA"/>
</dbReference>
<dbReference type="SMR" id="A0A024BTN9"/>
<dbReference type="SABIO-RK" id="A0A024BTN9"/>
<dbReference type="GO" id="GO:0005576">
    <property type="term" value="C:extracellular region"/>
    <property type="evidence" value="ECO:0007669"/>
    <property type="project" value="UniProtKB-SubCell"/>
</dbReference>
<dbReference type="GO" id="GO:0001716">
    <property type="term" value="F:L-amino-acid oxidase activity"/>
    <property type="evidence" value="ECO:0007669"/>
    <property type="project" value="UniProtKB-EC"/>
</dbReference>
<dbReference type="GO" id="GO:0009063">
    <property type="term" value="P:amino acid catabolic process"/>
    <property type="evidence" value="ECO:0007669"/>
    <property type="project" value="TreeGrafter"/>
</dbReference>
<dbReference type="GO" id="GO:0042742">
    <property type="term" value="P:defense response to bacterium"/>
    <property type="evidence" value="ECO:0007669"/>
    <property type="project" value="UniProtKB-KW"/>
</dbReference>
<dbReference type="FunFam" id="1.10.405.10:FF:000004">
    <property type="entry name" value="Amine oxidase"/>
    <property type="match status" value="1"/>
</dbReference>
<dbReference type="FunFam" id="3.50.50.60:FF:000450">
    <property type="entry name" value="Amine oxidase"/>
    <property type="match status" value="1"/>
</dbReference>
<dbReference type="Gene3D" id="3.90.660.10">
    <property type="match status" value="1"/>
</dbReference>
<dbReference type="Gene3D" id="3.50.50.60">
    <property type="entry name" value="FAD/NAD(P)-binding domain"/>
    <property type="match status" value="1"/>
</dbReference>
<dbReference type="Gene3D" id="1.10.405.10">
    <property type="entry name" value="Guanine Nucleotide Dissociation Inhibitor, domain 1"/>
    <property type="match status" value="1"/>
</dbReference>
<dbReference type="InterPro" id="IPR002937">
    <property type="entry name" value="Amino_oxidase"/>
</dbReference>
<dbReference type="InterPro" id="IPR036188">
    <property type="entry name" value="FAD/NAD-bd_sf"/>
</dbReference>
<dbReference type="InterPro" id="IPR050281">
    <property type="entry name" value="Flavin_monoamine_oxidase"/>
</dbReference>
<dbReference type="PANTHER" id="PTHR10742:SF355">
    <property type="entry name" value="AMINE OXIDASE"/>
    <property type="match status" value="1"/>
</dbReference>
<dbReference type="PANTHER" id="PTHR10742">
    <property type="entry name" value="FLAVIN MONOAMINE OXIDASE"/>
    <property type="match status" value="1"/>
</dbReference>
<dbReference type="Pfam" id="PF01593">
    <property type="entry name" value="Amino_oxidase"/>
    <property type="match status" value="1"/>
</dbReference>
<dbReference type="SUPFAM" id="SSF54373">
    <property type="entry name" value="FAD-linked reductases, C-terminal domain"/>
    <property type="match status" value="1"/>
</dbReference>
<dbReference type="SUPFAM" id="SSF51905">
    <property type="entry name" value="FAD/NAD(P)-binding domain"/>
    <property type="match status" value="1"/>
</dbReference>
<protein>
    <recommendedName>
        <fullName evidence="6">L-amino acid oxidase Bs29</fullName>
    </recommendedName>
    <alternativeName>
        <fullName evidence="7">BsLAAO</fullName>
        <shortName>LAO</shortName>
        <ecNumber evidence="5">1.4.3.2</ecNumber>
    </alternativeName>
</protein>
<organism>
    <name type="scientific">Bothriechis schlegelii</name>
    <name type="common">Eyelash palm pitviper</name>
    <dbReference type="NCBI Taxonomy" id="44725"/>
    <lineage>
        <taxon>Eukaryota</taxon>
        <taxon>Metazoa</taxon>
        <taxon>Chordata</taxon>
        <taxon>Craniata</taxon>
        <taxon>Vertebrata</taxon>
        <taxon>Euteleostomi</taxon>
        <taxon>Lepidosauria</taxon>
        <taxon>Squamata</taxon>
        <taxon>Bifurcata</taxon>
        <taxon>Unidentata</taxon>
        <taxon>Episquamata</taxon>
        <taxon>Toxicofera</taxon>
        <taxon>Serpentes</taxon>
        <taxon>Colubroidea</taxon>
        <taxon>Viperidae</taxon>
        <taxon>Crotalinae</taxon>
        <taxon>Bothriechis</taxon>
    </lineage>
</organism>